<dbReference type="EC" id="1.5.1.5" evidence="1"/>
<dbReference type="EC" id="3.5.4.9" evidence="1"/>
<dbReference type="EMBL" id="CP000246">
    <property type="protein sequence ID" value="ABG84091.1"/>
    <property type="molecule type" value="Genomic_DNA"/>
</dbReference>
<dbReference type="RefSeq" id="WP_011590961.1">
    <property type="nucleotide sequence ID" value="NC_008261.1"/>
</dbReference>
<dbReference type="SMR" id="Q0TPD4"/>
<dbReference type="STRING" id="195103.CPF_2077"/>
<dbReference type="PaxDb" id="195103-CPF_2077"/>
<dbReference type="KEGG" id="cpf:CPF_2077"/>
<dbReference type="eggNOG" id="COG0190">
    <property type="taxonomic scope" value="Bacteria"/>
</dbReference>
<dbReference type="HOGENOM" id="CLU_034045_2_1_9"/>
<dbReference type="BRENDA" id="1.5.1.5">
    <property type="organism ID" value="1503"/>
</dbReference>
<dbReference type="UniPathway" id="UPA00193"/>
<dbReference type="Proteomes" id="UP000001823">
    <property type="component" value="Chromosome"/>
</dbReference>
<dbReference type="GO" id="GO:0005829">
    <property type="term" value="C:cytosol"/>
    <property type="evidence" value="ECO:0007669"/>
    <property type="project" value="TreeGrafter"/>
</dbReference>
<dbReference type="GO" id="GO:0004477">
    <property type="term" value="F:methenyltetrahydrofolate cyclohydrolase activity"/>
    <property type="evidence" value="ECO:0007669"/>
    <property type="project" value="UniProtKB-UniRule"/>
</dbReference>
<dbReference type="GO" id="GO:0004488">
    <property type="term" value="F:methylenetetrahydrofolate dehydrogenase (NADP+) activity"/>
    <property type="evidence" value="ECO:0007669"/>
    <property type="project" value="UniProtKB-UniRule"/>
</dbReference>
<dbReference type="GO" id="GO:0000105">
    <property type="term" value="P:L-histidine biosynthetic process"/>
    <property type="evidence" value="ECO:0007669"/>
    <property type="project" value="UniProtKB-KW"/>
</dbReference>
<dbReference type="GO" id="GO:0009086">
    <property type="term" value="P:methionine biosynthetic process"/>
    <property type="evidence" value="ECO:0007669"/>
    <property type="project" value="UniProtKB-KW"/>
</dbReference>
<dbReference type="GO" id="GO:0006164">
    <property type="term" value="P:purine nucleotide biosynthetic process"/>
    <property type="evidence" value="ECO:0007669"/>
    <property type="project" value="UniProtKB-KW"/>
</dbReference>
<dbReference type="GO" id="GO:0035999">
    <property type="term" value="P:tetrahydrofolate interconversion"/>
    <property type="evidence" value="ECO:0007669"/>
    <property type="project" value="UniProtKB-UniRule"/>
</dbReference>
<dbReference type="CDD" id="cd01080">
    <property type="entry name" value="NAD_bind_m-THF_DH_Cyclohyd"/>
    <property type="match status" value="1"/>
</dbReference>
<dbReference type="FunFam" id="3.40.50.720:FF:000094">
    <property type="entry name" value="Bifunctional protein FolD"/>
    <property type="match status" value="1"/>
</dbReference>
<dbReference type="FunFam" id="3.40.50.10860:FF:000005">
    <property type="entry name" value="C-1-tetrahydrofolate synthase, cytoplasmic, putative"/>
    <property type="match status" value="1"/>
</dbReference>
<dbReference type="Gene3D" id="3.40.50.10860">
    <property type="entry name" value="Leucine Dehydrogenase, chain A, domain 1"/>
    <property type="match status" value="1"/>
</dbReference>
<dbReference type="Gene3D" id="3.40.50.720">
    <property type="entry name" value="NAD(P)-binding Rossmann-like Domain"/>
    <property type="match status" value="1"/>
</dbReference>
<dbReference type="HAMAP" id="MF_01576">
    <property type="entry name" value="THF_DHG_CYH"/>
    <property type="match status" value="1"/>
</dbReference>
<dbReference type="InterPro" id="IPR046346">
    <property type="entry name" value="Aminoacid_DH-like_N_sf"/>
</dbReference>
<dbReference type="InterPro" id="IPR036291">
    <property type="entry name" value="NAD(P)-bd_dom_sf"/>
</dbReference>
<dbReference type="InterPro" id="IPR000672">
    <property type="entry name" value="THF_DH/CycHdrlase"/>
</dbReference>
<dbReference type="InterPro" id="IPR020630">
    <property type="entry name" value="THF_DH/CycHdrlase_cat_dom"/>
</dbReference>
<dbReference type="InterPro" id="IPR020631">
    <property type="entry name" value="THF_DH/CycHdrlase_NAD-bd_dom"/>
</dbReference>
<dbReference type="NCBIfam" id="NF010769">
    <property type="entry name" value="PRK14172.1"/>
    <property type="match status" value="1"/>
</dbReference>
<dbReference type="PANTHER" id="PTHR48099:SF5">
    <property type="entry name" value="C-1-TETRAHYDROFOLATE SYNTHASE, CYTOPLASMIC"/>
    <property type="match status" value="1"/>
</dbReference>
<dbReference type="PANTHER" id="PTHR48099">
    <property type="entry name" value="C-1-TETRAHYDROFOLATE SYNTHASE, CYTOPLASMIC-RELATED"/>
    <property type="match status" value="1"/>
</dbReference>
<dbReference type="Pfam" id="PF00763">
    <property type="entry name" value="THF_DHG_CYH"/>
    <property type="match status" value="1"/>
</dbReference>
<dbReference type="Pfam" id="PF02882">
    <property type="entry name" value="THF_DHG_CYH_C"/>
    <property type="match status" value="1"/>
</dbReference>
<dbReference type="PRINTS" id="PR00085">
    <property type="entry name" value="THFDHDRGNASE"/>
</dbReference>
<dbReference type="SUPFAM" id="SSF53223">
    <property type="entry name" value="Aminoacid dehydrogenase-like, N-terminal domain"/>
    <property type="match status" value="1"/>
</dbReference>
<dbReference type="SUPFAM" id="SSF51735">
    <property type="entry name" value="NAD(P)-binding Rossmann-fold domains"/>
    <property type="match status" value="1"/>
</dbReference>
<reference key="1">
    <citation type="journal article" date="2006" name="Genome Res.">
        <title>Skewed genomic variability in strains of the toxigenic bacterial pathogen, Clostridium perfringens.</title>
        <authorList>
            <person name="Myers G.S.A."/>
            <person name="Rasko D.A."/>
            <person name="Cheung J.K."/>
            <person name="Ravel J."/>
            <person name="Seshadri R."/>
            <person name="DeBoy R.T."/>
            <person name="Ren Q."/>
            <person name="Varga J."/>
            <person name="Awad M.M."/>
            <person name="Brinkac L.M."/>
            <person name="Daugherty S.C."/>
            <person name="Haft D.H."/>
            <person name="Dodson R.J."/>
            <person name="Madupu R."/>
            <person name="Nelson W.C."/>
            <person name="Rosovitz M.J."/>
            <person name="Sullivan S.A."/>
            <person name="Khouri H."/>
            <person name="Dimitrov G.I."/>
            <person name="Watkins K.L."/>
            <person name="Mulligan S."/>
            <person name="Benton J."/>
            <person name="Radune D."/>
            <person name="Fisher D.J."/>
            <person name="Atkins H.S."/>
            <person name="Hiscox T."/>
            <person name="Jost B.H."/>
            <person name="Billington S.J."/>
            <person name="Songer J.G."/>
            <person name="McClane B.A."/>
            <person name="Titball R.W."/>
            <person name="Rood J.I."/>
            <person name="Melville S.B."/>
            <person name="Paulsen I.T."/>
        </authorList>
    </citation>
    <scope>NUCLEOTIDE SEQUENCE [LARGE SCALE GENOMIC DNA]</scope>
    <source>
        <strain>ATCC 13124 / DSM 756 / JCM 1290 / NCIMB 6125 / NCTC 8237 / S 107 / Type A</strain>
    </source>
</reference>
<keyword id="KW-0028">Amino-acid biosynthesis</keyword>
<keyword id="KW-0368">Histidine biosynthesis</keyword>
<keyword id="KW-0378">Hydrolase</keyword>
<keyword id="KW-0486">Methionine biosynthesis</keyword>
<keyword id="KW-0511">Multifunctional enzyme</keyword>
<keyword id="KW-0521">NADP</keyword>
<keyword id="KW-0554">One-carbon metabolism</keyword>
<keyword id="KW-0560">Oxidoreductase</keyword>
<keyword id="KW-0658">Purine biosynthesis</keyword>
<protein>
    <recommendedName>
        <fullName evidence="1">Bifunctional protein FolD</fullName>
    </recommendedName>
    <domain>
        <recommendedName>
            <fullName evidence="1">Methylenetetrahydrofolate dehydrogenase</fullName>
            <ecNumber evidence="1">1.5.1.5</ecNumber>
        </recommendedName>
    </domain>
    <domain>
        <recommendedName>
            <fullName evidence="1">Methenyltetrahydrofolate cyclohydrolase</fullName>
            <ecNumber evidence="1">3.5.4.9</ecNumber>
        </recommendedName>
    </domain>
</protein>
<sequence length="277" mass="30378">MDKILSGKTVAIDIKGQIKNYTEELKASGKSLKISSILVGDDGGSVYYQNFQEKLANNLGIDFEKIKLDESISEENLKLKIEELNKDDSVNGIMLLLPLPKHIDERAVTNLIDADKDLDCLSEVSVGRFYKGEKCFMPCTPNSVITLLKAYNIEIEGKEVVIIGRSNIVGKPLFQMFLNENATVTVCHSRTKNLKEVCKRADILVVAIGRANFIDSSYVREGAVVIDVGTSEVNGKITGDVNFDDVYEKASLITPVPGGVGSLTTTLLLKNVCKELD</sequence>
<comment type="function">
    <text evidence="1">Catalyzes the oxidation of 5,10-methylenetetrahydrofolate to 5,10-methenyltetrahydrofolate and then the hydrolysis of 5,10-methenyltetrahydrofolate to 10-formyltetrahydrofolate.</text>
</comment>
<comment type="catalytic activity">
    <reaction evidence="1">
        <text>(6R)-5,10-methylene-5,6,7,8-tetrahydrofolate + NADP(+) = (6R)-5,10-methenyltetrahydrofolate + NADPH</text>
        <dbReference type="Rhea" id="RHEA:22812"/>
        <dbReference type="ChEBI" id="CHEBI:15636"/>
        <dbReference type="ChEBI" id="CHEBI:57455"/>
        <dbReference type="ChEBI" id="CHEBI:57783"/>
        <dbReference type="ChEBI" id="CHEBI:58349"/>
        <dbReference type="EC" id="1.5.1.5"/>
    </reaction>
</comment>
<comment type="catalytic activity">
    <reaction evidence="1">
        <text>(6R)-5,10-methenyltetrahydrofolate + H2O = (6R)-10-formyltetrahydrofolate + H(+)</text>
        <dbReference type="Rhea" id="RHEA:23700"/>
        <dbReference type="ChEBI" id="CHEBI:15377"/>
        <dbReference type="ChEBI" id="CHEBI:15378"/>
        <dbReference type="ChEBI" id="CHEBI:57455"/>
        <dbReference type="ChEBI" id="CHEBI:195366"/>
        <dbReference type="EC" id="3.5.4.9"/>
    </reaction>
</comment>
<comment type="pathway">
    <text evidence="1">One-carbon metabolism; tetrahydrofolate interconversion.</text>
</comment>
<comment type="subunit">
    <text evidence="1">Homodimer.</text>
</comment>
<comment type="similarity">
    <text evidence="1">Belongs to the tetrahydrofolate dehydrogenase/cyclohydrolase family.</text>
</comment>
<proteinExistence type="inferred from homology"/>
<name>FOLD_CLOP1</name>
<feature type="chain" id="PRO_0000268318" description="Bifunctional protein FolD">
    <location>
        <begin position="1"/>
        <end position="277"/>
    </location>
</feature>
<feature type="binding site" evidence="1">
    <location>
        <begin position="164"/>
        <end position="166"/>
    </location>
    <ligand>
        <name>NADP(+)</name>
        <dbReference type="ChEBI" id="CHEBI:58349"/>
    </ligand>
</feature>
<feature type="binding site" evidence="1">
    <location>
        <position position="189"/>
    </location>
    <ligand>
        <name>NADP(+)</name>
        <dbReference type="ChEBI" id="CHEBI:58349"/>
    </ligand>
</feature>
<feature type="binding site" evidence="1">
    <location>
        <position position="230"/>
    </location>
    <ligand>
        <name>NADP(+)</name>
        <dbReference type="ChEBI" id="CHEBI:58349"/>
    </ligand>
</feature>
<evidence type="ECO:0000255" key="1">
    <source>
        <dbReference type="HAMAP-Rule" id="MF_01576"/>
    </source>
</evidence>
<gene>
    <name evidence="1" type="primary">folD</name>
    <name type="ordered locus">CPF_2077</name>
</gene>
<organism>
    <name type="scientific">Clostridium perfringens (strain ATCC 13124 / DSM 756 / JCM 1290 / NCIMB 6125 / NCTC 8237 / Type A)</name>
    <dbReference type="NCBI Taxonomy" id="195103"/>
    <lineage>
        <taxon>Bacteria</taxon>
        <taxon>Bacillati</taxon>
        <taxon>Bacillota</taxon>
        <taxon>Clostridia</taxon>
        <taxon>Eubacteriales</taxon>
        <taxon>Clostridiaceae</taxon>
        <taxon>Clostridium</taxon>
    </lineage>
</organism>
<accession>Q0TPD4</accession>